<protein>
    <recommendedName>
        <fullName evidence="1">tRNA-2-methylthio-N(6)-dimethylallyladenosine synthase</fullName>
        <ecNumber evidence="1">2.8.4.3</ecNumber>
    </recommendedName>
    <alternativeName>
        <fullName evidence="1">(Dimethylallyl)adenosine tRNA methylthiotransferase MiaB</fullName>
    </alternativeName>
    <alternativeName>
        <fullName evidence="1">tRNA-i(6)A37 methylthiotransferase</fullName>
    </alternativeName>
</protein>
<organism>
    <name type="scientific">Streptomyces griseus subsp. griseus (strain JCM 4626 / CBS 651.72 / NBRC 13350 / KCC S-0626 / ISP 5235)</name>
    <dbReference type="NCBI Taxonomy" id="455632"/>
    <lineage>
        <taxon>Bacteria</taxon>
        <taxon>Bacillati</taxon>
        <taxon>Actinomycetota</taxon>
        <taxon>Actinomycetes</taxon>
        <taxon>Kitasatosporales</taxon>
        <taxon>Streptomycetaceae</taxon>
        <taxon>Streptomyces</taxon>
    </lineage>
</organism>
<dbReference type="EC" id="2.8.4.3" evidence="1"/>
<dbReference type="EMBL" id="AP009493">
    <property type="protein sequence ID" value="BAG18561.1"/>
    <property type="molecule type" value="Genomic_DNA"/>
</dbReference>
<dbReference type="RefSeq" id="WP_012378743.1">
    <property type="nucleotide sequence ID" value="NC_010572.1"/>
</dbReference>
<dbReference type="SMR" id="B1VXU5"/>
<dbReference type="KEGG" id="sgr:SGR_1732"/>
<dbReference type="PATRIC" id="fig|455632.4.peg.1759"/>
<dbReference type="eggNOG" id="COG0621">
    <property type="taxonomic scope" value="Bacteria"/>
</dbReference>
<dbReference type="HOGENOM" id="CLU_018697_2_2_11"/>
<dbReference type="Proteomes" id="UP000001685">
    <property type="component" value="Chromosome"/>
</dbReference>
<dbReference type="GO" id="GO:0005829">
    <property type="term" value="C:cytosol"/>
    <property type="evidence" value="ECO:0007669"/>
    <property type="project" value="TreeGrafter"/>
</dbReference>
<dbReference type="GO" id="GO:0051539">
    <property type="term" value="F:4 iron, 4 sulfur cluster binding"/>
    <property type="evidence" value="ECO:0007669"/>
    <property type="project" value="UniProtKB-UniRule"/>
</dbReference>
<dbReference type="GO" id="GO:0046872">
    <property type="term" value="F:metal ion binding"/>
    <property type="evidence" value="ECO:0007669"/>
    <property type="project" value="UniProtKB-KW"/>
</dbReference>
<dbReference type="GO" id="GO:0035597">
    <property type="term" value="F:N6-isopentenyladenosine methylthiotransferase activity"/>
    <property type="evidence" value="ECO:0007669"/>
    <property type="project" value="TreeGrafter"/>
</dbReference>
<dbReference type="CDD" id="cd01335">
    <property type="entry name" value="Radical_SAM"/>
    <property type="match status" value="1"/>
</dbReference>
<dbReference type="FunFam" id="3.40.50.12160:FF:000008">
    <property type="entry name" value="tRNA-2-methylthio-N(6)-dimethylallyladenosine synthase"/>
    <property type="match status" value="1"/>
</dbReference>
<dbReference type="FunFam" id="3.80.30.20:FF:000001">
    <property type="entry name" value="tRNA-2-methylthio-N(6)-dimethylallyladenosine synthase 2"/>
    <property type="match status" value="1"/>
</dbReference>
<dbReference type="Gene3D" id="3.40.50.12160">
    <property type="entry name" value="Methylthiotransferase, N-terminal domain"/>
    <property type="match status" value="1"/>
</dbReference>
<dbReference type="Gene3D" id="3.80.30.20">
    <property type="entry name" value="tm_1862 like domain"/>
    <property type="match status" value="1"/>
</dbReference>
<dbReference type="HAMAP" id="MF_01864">
    <property type="entry name" value="tRNA_metthiotr_MiaB"/>
    <property type="match status" value="1"/>
</dbReference>
<dbReference type="InterPro" id="IPR006638">
    <property type="entry name" value="Elp3/MiaA/NifB-like_rSAM"/>
</dbReference>
<dbReference type="InterPro" id="IPR005839">
    <property type="entry name" value="Methylthiotransferase"/>
</dbReference>
<dbReference type="InterPro" id="IPR020612">
    <property type="entry name" value="Methylthiotransferase_CS"/>
</dbReference>
<dbReference type="InterPro" id="IPR013848">
    <property type="entry name" value="Methylthiotransferase_N"/>
</dbReference>
<dbReference type="InterPro" id="IPR038135">
    <property type="entry name" value="Methylthiotransferase_N_sf"/>
</dbReference>
<dbReference type="InterPro" id="IPR006463">
    <property type="entry name" value="MiaB_methiolase"/>
</dbReference>
<dbReference type="InterPro" id="IPR007197">
    <property type="entry name" value="rSAM"/>
</dbReference>
<dbReference type="InterPro" id="IPR023404">
    <property type="entry name" value="rSAM_horseshoe"/>
</dbReference>
<dbReference type="InterPro" id="IPR002792">
    <property type="entry name" value="TRAM_dom"/>
</dbReference>
<dbReference type="NCBIfam" id="TIGR01574">
    <property type="entry name" value="miaB-methiolase"/>
    <property type="match status" value="1"/>
</dbReference>
<dbReference type="NCBIfam" id="TIGR00089">
    <property type="entry name" value="MiaB/RimO family radical SAM methylthiotransferase"/>
    <property type="match status" value="1"/>
</dbReference>
<dbReference type="PANTHER" id="PTHR43020">
    <property type="entry name" value="CDK5 REGULATORY SUBUNIT-ASSOCIATED PROTEIN 1"/>
    <property type="match status" value="1"/>
</dbReference>
<dbReference type="PANTHER" id="PTHR43020:SF2">
    <property type="entry name" value="MITOCHONDRIAL TRNA METHYLTHIOTRANSFERASE CDK5RAP1"/>
    <property type="match status" value="1"/>
</dbReference>
<dbReference type="Pfam" id="PF04055">
    <property type="entry name" value="Radical_SAM"/>
    <property type="match status" value="1"/>
</dbReference>
<dbReference type="Pfam" id="PF00919">
    <property type="entry name" value="UPF0004"/>
    <property type="match status" value="1"/>
</dbReference>
<dbReference type="SFLD" id="SFLDF00273">
    <property type="entry name" value="(dimethylallyl)adenosine_tRNA"/>
    <property type="match status" value="1"/>
</dbReference>
<dbReference type="SFLD" id="SFLDG01082">
    <property type="entry name" value="B12-binding_domain_containing"/>
    <property type="match status" value="1"/>
</dbReference>
<dbReference type="SFLD" id="SFLDG01061">
    <property type="entry name" value="methylthiotransferase"/>
    <property type="match status" value="1"/>
</dbReference>
<dbReference type="SMART" id="SM00729">
    <property type="entry name" value="Elp3"/>
    <property type="match status" value="1"/>
</dbReference>
<dbReference type="SUPFAM" id="SSF102114">
    <property type="entry name" value="Radical SAM enzymes"/>
    <property type="match status" value="1"/>
</dbReference>
<dbReference type="PROSITE" id="PS51449">
    <property type="entry name" value="MTTASE_N"/>
    <property type="match status" value="1"/>
</dbReference>
<dbReference type="PROSITE" id="PS01278">
    <property type="entry name" value="MTTASE_RADICAL"/>
    <property type="match status" value="1"/>
</dbReference>
<dbReference type="PROSITE" id="PS51918">
    <property type="entry name" value="RADICAL_SAM"/>
    <property type="match status" value="1"/>
</dbReference>
<dbReference type="PROSITE" id="PS50926">
    <property type="entry name" value="TRAM"/>
    <property type="match status" value="1"/>
</dbReference>
<keyword id="KW-0004">4Fe-4S</keyword>
<keyword id="KW-0963">Cytoplasm</keyword>
<keyword id="KW-0408">Iron</keyword>
<keyword id="KW-0411">Iron-sulfur</keyword>
<keyword id="KW-0479">Metal-binding</keyword>
<keyword id="KW-0949">S-adenosyl-L-methionine</keyword>
<keyword id="KW-0808">Transferase</keyword>
<keyword id="KW-0819">tRNA processing</keyword>
<comment type="function">
    <text evidence="1">Catalyzes the methylthiolation of N6-(dimethylallyl)adenosine (i(6)A), leading to the formation of 2-methylthio-N6-(dimethylallyl)adenosine (ms(2)i(6)A) at position 37 in tRNAs that read codons beginning with uridine.</text>
</comment>
<comment type="catalytic activity">
    <reaction evidence="1">
        <text>N(6)-dimethylallyladenosine(37) in tRNA + (sulfur carrier)-SH + AH2 + 2 S-adenosyl-L-methionine = 2-methylsulfanyl-N(6)-dimethylallyladenosine(37) in tRNA + (sulfur carrier)-H + 5'-deoxyadenosine + L-methionine + A + S-adenosyl-L-homocysteine + 2 H(+)</text>
        <dbReference type="Rhea" id="RHEA:37067"/>
        <dbReference type="Rhea" id="RHEA-COMP:10375"/>
        <dbReference type="Rhea" id="RHEA-COMP:10376"/>
        <dbReference type="Rhea" id="RHEA-COMP:14737"/>
        <dbReference type="Rhea" id="RHEA-COMP:14739"/>
        <dbReference type="ChEBI" id="CHEBI:13193"/>
        <dbReference type="ChEBI" id="CHEBI:15378"/>
        <dbReference type="ChEBI" id="CHEBI:17319"/>
        <dbReference type="ChEBI" id="CHEBI:17499"/>
        <dbReference type="ChEBI" id="CHEBI:29917"/>
        <dbReference type="ChEBI" id="CHEBI:57844"/>
        <dbReference type="ChEBI" id="CHEBI:57856"/>
        <dbReference type="ChEBI" id="CHEBI:59789"/>
        <dbReference type="ChEBI" id="CHEBI:64428"/>
        <dbReference type="ChEBI" id="CHEBI:74415"/>
        <dbReference type="ChEBI" id="CHEBI:74417"/>
        <dbReference type="EC" id="2.8.4.3"/>
    </reaction>
</comment>
<comment type="cofactor">
    <cofactor evidence="1">
        <name>[4Fe-4S] cluster</name>
        <dbReference type="ChEBI" id="CHEBI:49883"/>
    </cofactor>
    <text evidence="1">Binds 2 [4Fe-4S] clusters. One cluster is coordinated with 3 cysteines and an exchangeable S-adenosyl-L-methionine.</text>
</comment>
<comment type="subunit">
    <text evidence="1">Monomer.</text>
</comment>
<comment type="subcellular location">
    <subcellularLocation>
        <location evidence="1">Cytoplasm</location>
    </subcellularLocation>
</comment>
<comment type="similarity">
    <text evidence="1">Belongs to the methylthiotransferase family. MiaB subfamily.</text>
</comment>
<sequence length="506" mass="55005">MSSGNRSEAVDVQKSYEVRTYGCQMNVHDSERLSGLLEGAGYVRAPEGSDGDADVVVFNTCAVRENADNKLYGNLGRLAPMKTKRPGMQIAVGGCLAQKDRDTIVKRAPWVDVVFGTHNIGKLPVLLERARVQEEAQIEIAESLEAFPSTLPTRRESAYAAWVSISVGCNNTCTFCIVPALRGKEKDRRTGDILAEIEALVAEGVCEITLLGQNVNAYGSDIGDREAFSKLLRACGRIEGLERVRFTSPHPRDFTDDVIAAMAETPNVMPQLHMPMQSGSDTVLKAMRRSYRQERFLGIIEKVRAAMPEAAISTDIIVGFPGETEEDFEQTMHAVREARFANAFTFQYSKRPGTPAADMDGQIPKEVVQERYMRLSALQEQISWDENKKQVGRTLDVMVAEGEGRKDGATQRLSGRAPDNRLVHFTQPEKAVRPGDVVTVEITYAAPHHLLAEGTPLAVRSTRAGDAWEKRTTGAAAKPAGVMLGLPGIGAPEPLPAAGAPACGIG</sequence>
<evidence type="ECO:0000255" key="1">
    <source>
        <dbReference type="HAMAP-Rule" id="MF_01864"/>
    </source>
</evidence>
<evidence type="ECO:0000255" key="2">
    <source>
        <dbReference type="PROSITE-ProRule" id="PRU01266"/>
    </source>
</evidence>
<accession>B1VXU5</accession>
<feature type="chain" id="PRO_0000374586" description="tRNA-2-methylthio-N(6)-dimethylallyladenosine synthase">
    <location>
        <begin position="1"/>
        <end position="506"/>
    </location>
</feature>
<feature type="domain" description="MTTase N-terminal" evidence="1">
    <location>
        <begin position="14"/>
        <end position="132"/>
    </location>
</feature>
<feature type="domain" description="Radical SAM core" evidence="2">
    <location>
        <begin position="155"/>
        <end position="386"/>
    </location>
</feature>
<feature type="domain" description="TRAM" evidence="1">
    <location>
        <begin position="388"/>
        <end position="456"/>
    </location>
</feature>
<feature type="binding site" evidence="1">
    <location>
        <position position="23"/>
    </location>
    <ligand>
        <name>[4Fe-4S] cluster</name>
        <dbReference type="ChEBI" id="CHEBI:49883"/>
        <label>1</label>
    </ligand>
</feature>
<feature type="binding site" evidence="1">
    <location>
        <position position="61"/>
    </location>
    <ligand>
        <name>[4Fe-4S] cluster</name>
        <dbReference type="ChEBI" id="CHEBI:49883"/>
        <label>1</label>
    </ligand>
</feature>
<feature type="binding site" evidence="1">
    <location>
        <position position="95"/>
    </location>
    <ligand>
        <name>[4Fe-4S] cluster</name>
        <dbReference type="ChEBI" id="CHEBI:49883"/>
        <label>1</label>
    </ligand>
</feature>
<feature type="binding site" evidence="1">
    <location>
        <position position="169"/>
    </location>
    <ligand>
        <name>[4Fe-4S] cluster</name>
        <dbReference type="ChEBI" id="CHEBI:49883"/>
        <label>2</label>
        <note>4Fe-4S-S-AdoMet</note>
    </ligand>
</feature>
<feature type="binding site" evidence="1">
    <location>
        <position position="173"/>
    </location>
    <ligand>
        <name>[4Fe-4S] cluster</name>
        <dbReference type="ChEBI" id="CHEBI:49883"/>
        <label>2</label>
        <note>4Fe-4S-S-AdoMet</note>
    </ligand>
</feature>
<feature type="binding site" evidence="1">
    <location>
        <position position="176"/>
    </location>
    <ligand>
        <name>[4Fe-4S] cluster</name>
        <dbReference type="ChEBI" id="CHEBI:49883"/>
        <label>2</label>
        <note>4Fe-4S-S-AdoMet</note>
    </ligand>
</feature>
<proteinExistence type="inferred from homology"/>
<reference key="1">
    <citation type="journal article" date="2008" name="J. Bacteriol.">
        <title>Genome sequence of the streptomycin-producing microorganism Streptomyces griseus IFO 13350.</title>
        <authorList>
            <person name="Ohnishi Y."/>
            <person name="Ishikawa J."/>
            <person name="Hara H."/>
            <person name="Suzuki H."/>
            <person name="Ikenoya M."/>
            <person name="Ikeda H."/>
            <person name="Yamashita A."/>
            <person name="Hattori M."/>
            <person name="Horinouchi S."/>
        </authorList>
    </citation>
    <scope>NUCLEOTIDE SEQUENCE [LARGE SCALE GENOMIC DNA]</scope>
    <source>
        <strain>JCM 4626 / CBS 651.72 / NBRC 13350 / KCC S-0626 / ISP 5235</strain>
    </source>
</reference>
<gene>
    <name evidence="1" type="primary">miaB</name>
    <name type="ordered locus">SGR_1732</name>
</gene>
<name>MIAB_STRGG</name>